<sequence length="638" mass="67858">MSTGVQTKAAPGAGQHADGPRLLADIGGTNARFALETSPGEIGSVKVYPCADYPGVAEVIKRYLKDTKIGRVNHAAIAIANPVDGDQVSMTNHDWSFSIEATRRALGFDTLLVVNDFTALAMALPGLTDAQRVQVGGGTRRPNSVIGLLGPGTGMGVSGLIPADDRWIALGSEGGHATFAPADEREDIVLQYARKKWSHVSFERVAAGPGIEVIYRALAGRDKKRVAANVDTIEIVKRAMEGEPLAAESVDVFCGILGTFAGNIAVTLGALGGIYIGGGVVPRLGELFARSSFRKRFEAKGRFEAYLQNVPTYVITAEYPAFLGVSAILAEQLSNRAGGSSSAVFERIRQMRDALTPAERRVADLALNHPRSIINDPIVDIARKADVSQPTVIRFCRSLGCQGLSDFKLKLATGLTGTIPVSHSQVHLGDTATDFGAKVLDNTVSAILQLREHLNFEHVERAIDLLNGARRIEFYGLGNSNIVAQDAHYKFFRFGIPTIAYGDLYMQAASAALLGKGDVIVAVSKSGRAPELLRVLDVAMQAGAKVIAITSSNTPLAKRATVALETDHIEIRESQLSMISRILHLVMIDILAVGVAIRRAVPSADVAETVAKARQGADDDATAVLDWLSHGAASSARD</sequence>
<proteinExistence type="inferred from homology"/>
<name>GLK_PARXL</name>
<protein>
    <recommendedName>
        <fullName>Bifunctional protein glk</fullName>
    </recommendedName>
    <domain>
        <recommendedName>
            <fullName>Glucokinase</fullName>
            <ecNumber>2.7.1.2</ecNumber>
        </recommendedName>
        <alternativeName>
            <fullName>Glucose kinase</fullName>
        </alternativeName>
    </domain>
    <domain>
        <recommendedName>
            <fullName>Putative HTH-type transcriptional regulator</fullName>
        </recommendedName>
    </domain>
</protein>
<dbReference type="EC" id="2.7.1.2"/>
<dbReference type="EMBL" id="CP000270">
    <property type="protein sequence ID" value="ABE29531.1"/>
    <property type="molecule type" value="Genomic_DNA"/>
</dbReference>
<dbReference type="RefSeq" id="WP_007175889.1">
    <property type="nucleotide sequence ID" value="NC_007951.1"/>
</dbReference>
<dbReference type="SMR" id="Q143F8"/>
<dbReference type="STRING" id="266265.Bxe_A3454"/>
<dbReference type="KEGG" id="bxb:DR64_1155"/>
<dbReference type="KEGG" id="bxe:Bxe_A3454"/>
<dbReference type="eggNOG" id="COG0837">
    <property type="taxonomic scope" value="Bacteria"/>
</dbReference>
<dbReference type="eggNOG" id="COG1737">
    <property type="taxonomic scope" value="Bacteria"/>
</dbReference>
<dbReference type="OrthoDB" id="257751at2"/>
<dbReference type="Proteomes" id="UP000001817">
    <property type="component" value="Chromosome 1"/>
</dbReference>
<dbReference type="GO" id="GO:0005829">
    <property type="term" value="C:cytosol"/>
    <property type="evidence" value="ECO:0007669"/>
    <property type="project" value="TreeGrafter"/>
</dbReference>
<dbReference type="GO" id="GO:0005524">
    <property type="term" value="F:ATP binding"/>
    <property type="evidence" value="ECO:0007669"/>
    <property type="project" value="UniProtKB-UniRule"/>
</dbReference>
<dbReference type="GO" id="GO:0005536">
    <property type="term" value="F:D-glucose binding"/>
    <property type="evidence" value="ECO:0007669"/>
    <property type="project" value="InterPro"/>
</dbReference>
<dbReference type="GO" id="GO:0003677">
    <property type="term" value="F:DNA binding"/>
    <property type="evidence" value="ECO:0007669"/>
    <property type="project" value="UniProtKB-KW"/>
</dbReference>
<dbReference type="GO" id="GO:0003700">
    <property type="term" value="F:DNA-binding transcription factor activity"/>
    <property type="evidence" value="ECO:0007669"/>
    <property type="project" value="InterPro"/>
</dbReference>
<dbReference type="GO" id="GO:0004340">
    <property type="term" value="F:glucokinase activity"/>
    <property type="evidence" value="ECO:0007669"/>
    <property type="project" value="UniProtKB-UniRule"/>
</dbReference>
<dbReference type="GO" id="GO:0006096">
    <property type="term" value="P:glycolytic process"/>
    <property type="evidence" value="ECO:0007669"/>
    <property type="project" value="UniProtKB-UniRule"/>
</dbReference>
<dbReference type="CDD" id="cd24008">
    <property type="entry name" value="ASKHA_NBD_GLK"/>
    <property type="match status" value="1"/>
</dbReference>
<dbReference type="CDD" id="cd05013">
    <property type="entry name" value="SIS_RpiR"/>
    <property type="match status" value="1"/>
</dbReference>
<dbReference type="Gene3D" id="3.30.420.40">
    <property type="match status" value="1"/>
</dbReference>
<dbReference type="Gene3D" id="3.40.367.20">
    <property type="match status" value="1"/>
</dbReference>
<dbReference type="Gene3D" id="3.40.50.10490">
    <property type="entry name" value="Glucose-6-phosphate isomerase like protein, domain 1"/>
    <property type="match status" value="1"/>
</dbReference>
<dbReference type="Gene3D" id="1.10.10.10">
    <property type="entry name" value="Winged helix-like DNA-binding domain superfamily/Winged helix DNA-binding domain"/>
    <property type="match status" value="1"/>
</dbReference>
<dbReference type="HAMAP" id="MF_00524">
    <property type="entry name" value="Glucokinase"/>
    <property type="match status" value="1"/>
</dbReference>
<dbReference type="InterPro" id="IPR043129">
    <property type="entry name" value="ATPase_NBD"/>
</dbReference>
<dbReference type="InterPro" id="IPR050201">
    <property type="entry name" value="Bacterial_glucokinase"/>
</dbReference>
<dbReference type="InterPro" id="IPR003836">
    <property type="entry name" value="Glucokinase"/>
</dbReference>
<dbReference type="InterPro" id="IPR009057">
    <property type="entry name" value="Homeodomain-like_sf"/>
</dbReference>
<dbReference type="InterPro" id="IPR000281">
    <property type="entry name" value="HTH_RpiR"/>
</dbReference>
<dbReference type="InterPro" id="IPR035472">
    <property type="entry name" value="RpiR-like_SIS"/>
</dbReference>
<dbReference type="InterPro" id="IPR001347">
    <property type="entry name" value="SIS_dom"/>
</dbReference>
<dbReference type="InterPro" id="IPR046348">
    <property type="entry name" value="SIS_dom_sf"/>
</dbReference>
<dbReference type="InterPro" id="IPR036388">
    <property type="entry name" value="WH-like_DNA-bd_sf"/>
</dbReference>
<dbReference type="NCBIfam" id="TIGR00749">
    <property type="entry name" value="glk"/>
    <property type="match status" value="1"/>
</dbReference>
<dbReference type="NCBIfam" id="NF001416">
    <property type="entry name" value="PRK00292.1-3"/>
    <property type="match status" value="1"/>
</dbReference>
<dbReference type="NCBIfam" id="NF010701">
    <property type="entry name" value="PRK14101.1"/>
    <property type="match status" value="1"/>
</dbReference>
<dbReference type="PANTHER" id="PTHR47690">
    <property type="entry name" value="GLUCOKINASE"/>
    <property type="match status" value="1"/>
</dbReference>
<dbReference type="PANTHER" id="PTHR47690:SF1">
    <property type="entry name" value="GLUCOKINASE"/>
    <property type="match status" value="1"/>
</dbReference>
<dbReference type="Pfam" id="PF02685">
    <property type="entry name" value="Glucokinase"/>
    <property type="match status" value="1"/>
</dbReference>
<dbReference type="Pfam" id="PF01418">
    <property type="entry name" value="HTH_6"/>
    <property type="match status" value="1"/>
</dbReference>
<dbReference type="Pfam" id="PF01380">
    <property type="entry name" value="SIS"/>
    <property type="match status" value="1"/>
</dbReference>
<dbReference type="SUPFAM" id="SSF53067">
    <property type="entry name" value="Actin-like ATPase domain"/>
    <property type="match status" value="1"/>
</dbReference>
<dbReference type="SUPFAM" id="SSF46689">
    <property type="entry name" value="Homeodomain-like"/>
    <property type="match status" value="1"/>
</dbReference>
<dbReference type="SUPFAM" id="SSF53697">
    <property type="entry name" value="SIS domain"/>
    <property type="match status" value="1"/>
</dbReference>
<dbReference type="PROSITE" id="PS00356">
    <property type="entry name" value="HTH_LACI_1"/>
    <property type="match status" value="1"/>
</dbReference>
<dbReference type="PROSITE" id="PS51071">
    <property type="entry name" value="HTH_RPIR"/>
    <property type="match status" value="1"/>
</dbReference>
<dbReference type="PROSITE" id="PS51464">
    <property type="entry name" value="SIS"/>
    <property type="match status" value="1"/>
</dbReference>
<reference key="1">
    <citation type="journal article" date="2006" name="Proc. Natl. Acad. Sci. U.S.A.">
        <title>Burkholderia xenovorans LB400 harbors a multi-replicon, 9.73-Mbp genome shaped for versatility.</title>
        <authorList>
            <person name="Chain P.S.G."/>
            <person name="Denef V.J."/>
            <person name="Konstantinidis K.T."/>
            <person name="Vergez L.M."/>
            <person name="Agullo L."/>
            <person name="Reyes V.L."/>
            <person name="Hauser L."/>
            <person name="Cordova M."/>
            <person name="Gomez L."/>
            <person name="Gonzalez M."/>
            <person name="Land M."/>
            <person name="Lao V."/>
            <person name="Larimer F."/>
            <person name="LiPuma J.J."/>
            <person name="Mahenthiralingam E."/>
            <person name="Malfatti S.A."/>
            <person name="Marx C.J."/>
            <person name="Parnell J.J."/>
            <person name="Ramette A."/>
            <person name="Richardson P."/>
            <person name="Seeger M."/>
            <person name="Smith D."/>
            <person name="Spilker T."/>
            <person name="Sul W.J."/>
            <person name="Tsoi T.V."/>
            <person name="Ulrich L.E."/>
            <person name="Zhulin I.B."/>
            <person name="Tiedje J.M."/>
        </authorList>
    </citation>
    <scope>NUCLEOTIDE SEQUENCE [LARGE SCALE GENOMIC DNA]</scope>
    <source>
        <strain>LB400</strain>
    </source>
</reference>
<accession>Q143F8</accession>
<keyword id="KW-0067">ATP-binding</keyword>
<keyword id="KW-0963">Cytoplasm</keyword>
<keyword id="KW-0238">DNA-binding</keyword>
<keyword id="KW-0324">Glycolysis</keyword>
<keyword id="KW-0418">Kinase</keyword>
<keyword id="KW-0511">Multifunctional enzyme</keyword>
<keyword id="KW-0547">Nucleotide-binding</keyword>
<keyword id="KW-1185">Reference proteome</keyword>
<keyword id="KW-0804">Transcription</keyword>
<keyword id="KW-0805">Transcription regulation</keyword>
<keyword id="KW-0808">Transferase</keyword>
<feature type="chain" id="PRO_0000268802" description="Bifunctional protein glk">
    <location>
        <begin position="1"/>
        <end position="638"/>
    </location>
</feature>
<feature type="domain" description="HTH rpiR-type">
    <location>
        <begin position="342"/>
        <end position="418"/>
    </location>
</feature>
<feature type="domain" description="SIS">
    <location>
        <begin position="462"/>
        <end position="601"/>
    </location>
</feature>
<feature type="DNA-binding region" description="H-T-H motif" evidence="1">
    <location>
        <begin position="378"/>
        <end position="397"/>
    </location>
</feature>
<feature type="region of interest" description="Glucokinase">
    <location>
        <begin position="1"/>
        <end position="341"/>
    </location>
</feature>
<feature type="region of interest" description="Disordered" evidence="3">
    <location>
        <begin position="1"/>
        <end position="20"/>
    </location>
</feature>
<feature type="region of interest" description="Putative HTH-type transcriptional regulator">
    <location>
        <begin position="342"/>
        <end position="638"/>
    </location>
</feature>
<feature type="binding site" evidence="2">
    <location>
        <begin position="24"/>
        <end position="29"/>
    </location>
    <ligand>
        <name>ATP</name>
        <dbReference type="ChEBI" id="CHEBI:30616"/>
    </ligand>
</feature>
<evidence type="ECO:0000250" key="1"/>
<evidence type="ECO:0000255" key="2"/>
<evidence type="ECO:0000256" key="3">
    <source>
        <dbReference type="SAM" id="MobiDB-lite"/>
    </source>
</evidence>
<evidence type="ECO:0000305" key="4"/>
<organism>
    <name type="scientific">Paraburkholderia xenovorans (strain LB400)</name>
    <dbReference type="NCBI Taxonomy" id="266265"/>
    <lineage>
        <taxon>Bacteria</taxon>
        <taxon>Pseudomonadati</taxon>
        <taxon>Pseudomonadota</taxon>
        <taxon>Betaproteobacteria</taxon>
        <taxon>Burkholderiales</taxon>
        <taxon>Burkholderiaceae</taxon>
        <taxon>Paraburkholderia</taxon>
    </lineage>
</organism>
<comment type="catalytic activity">
    <reaction>
        <text>D-glucose + ATP = D-glucose 6-phosphate + ADP + H(+)</text>
        <dbReference type="Rhea" id="RHEA:17825"/>
        <dbReference type="ChEBI" id="CHEBI:4167"/>
        <dbReference type="ChEBI" id="CHEBI:15378"/>
        <dbReference type="ChEBI" id="CHEBI:30616"/>
        <dbReference type="ChEBI" id="CHEBI:61548"/>
        <dbReference type="ChEBI" id="CHEBI:456216"/>
        <dbReference type="EC" id="2.7.1.2"/>
    </reaction>
</comment>
<comment type="subcellular location">
    <subcellularLocation>
        <location evidence="1">Cytoplasm</location>
    </subcellularLocation>
</comment>
<comment type="similarity">
    <text evidence="4">In the N-terminal section; belongs to the bacterial glucokinase family.</text>
</comment>
<gene>
    <name type="primary">glk</name>
    <name type="ordered locus">Bxeno_A0993</name>
    <name type="ORF">Bxe_A3454</name>
</gene>